<evidence type="ECO:0000250" key="1">
    <source>
        <dbReference type="UniProtKB" id="Q53WD3"/>
    </source>
</evidence>
<evidence type="ECO:0000303" key="2">
    <source>
    </source>
</evidence>
<evidence type="ECO:0000305" key="3"/>
<sequence>MAFPRVRLVVTADDFGYCPRRDEGIVEAFLAGTVTSVSLLVNGTAAESAAELARRHSIPTGLHANLSEGRPVGPARHNASSLLSPEGFFLGKMGFREALAAGDVALPQVREELEAQLSRFRELLGRSPTHVDGHQHVHVLPGVCQVFAEALQAYGVRFTRLPAERGVGSCAWLEAPARAFACTVERDARAAIGPFSRHGLRWTDAFVGLSTCGRHMSAHRVLGSLARALEDIPAGHALTAELMAHPGYPSVPPAGGCGEGPDAFSCSWERLHELHVLTAPTLRAWLAQNGVQLCAIDDLDSKRPGEGVPL</sequence>
<accession>Q14BV6</accession>
<accession>Q8C5Z5</accession>
<accession>Q9D8Z7</accession>
<comment type="function">
    <text evidence="1">Probably catalyzes the deacetylation of acetylated carbohydrates an important step in the degradation of oligosaccharides.</text>
</comment>
<comment type="cofactor">
    <cofactor evidence="1">
        <name>Mg(2+)</name>
        <dbReference type="ChEBI" id="CHEBI:18420"/>
    </cofactor>
</comment>
<comment type="alternative products">
    <event type="alternative splicing"/>
    <isoform>
        <id>Q14BV6-1</id>
        <name>1</name>
        <sequence type="displayed"/>
    </isoform>
    <isoform>
        <id>Q14BV6-2</id>
        <name>2</name>
        <sequence type="described" ref="VSP_032788"/>
    </isoform>
</comment>
<comment type="similarity">
    <text evidence="3">Belongs to the YdjC deacetylase family.</text>
</comment>
<comment type="sequence caution" evidence="3">
    <conflict type="frameshift">
        <sequence resource="EMBL-CDS" id="BAC36514"/>
    </conflict>
</comment>
<name>YDJC_MOUSE</name>
<organism>
    <name type="scientific">Mus musculus</name>
    <name type="common">Mouse</name>
    <dbReference type="NCBI Taxonomy" id="10090"/>
    <lineage>
        <taxon>Eukaryota</taxon>
        <taxon>Metazoa</taxon>
        <taxon>Chordata</taxon>
        <taxon>Craniata</taxon>
        <taxon>Vertebrata</taxon>
        <taxon>Euteleostomi</taxon>
        <taxon>Mammalia</taxon>
        <taxon>Eutheria</taxon>
        <taxon>Euarchontoglires</taxon>
        <taxon>Glires</taxon>
        <taxon>Rodentia</taxon>
        <taxon>Myomorpha</taxon>
        <taxon>Muroidea</taxon>
        <taxon>Muridae</taxon>
        <taxon>Murinae</taxon>
        <taxon>Mus</taxon>
        <taxon>Mus</taxon>
    </lineage>
</organism>
<feature type="chain" id="PRO_0000328775" description="Carbohydrate deacetylase">
    <location>
        <begin position="1"/>
        <end position="310"/>
    </location>
</feature>
<feature type="active site" description="Proton acceptor" evidence="1">
    <location>
        <position position="13"/>
    </location>
</feature>
<feature type="binding site" evidence="1">
    <location>
        <position position="14"/>
    </location>
    <ligand>
        <name>Mg(2+)</name>
        <dbReference type="ChEBI" id="CHEBI:18420"/>
    </ligand>
</feature>
<feature type="binding site" evidence="1">
    <location>
        <position position="134"/>
    </location>
    <ligand>
        <name>Mg(2+)</name>
        <dbReference type="ChEBI" id="CHEBI:18420"/>
    </ligand>
</feature>
<feature type="splice variant" id="VSP_032788" description="In isoform 2." evidence="2">
    <original>WTDAFVGLSTCGRHMSAHRVLGSLARALEDIPAGHALTAELMAHPGYPSVPPAGGCGEGPDAFSCSWERLHELHVLTAPTLRAWLAQNGVQLCAIDDLDSKRPGEGVPL</original>
    <variation>DSSWSVTTAECSEGFAEFCSAGILPSLQTENQCDLGHTGGKGRSPESFLPCTLGIALGMWSVLCFPRIAV</variation>
    <location>
        <begin position="202"/>
        <end position="310"/>
    </location>
</feature>
<feature type="sequence conflict" description="In Ref. 1; BAC36514." evidence="3" ref="1">
    <original>Q</original>
    <variation>P</variation>
    <location>
        <position position="108"/>
    </location>
</feature>
<feature type="sequence conflict" description="In Ref. 2; AAI15586." evidence="3" ref="2">
    <original>P</original>
    <variation>L</variation>
    <location>
        <position position="176"/>
    </location>
</feature>
<feature type="sequence conflict" description="In Ref. 1; BAC36514." evidence="3" ref="1">
    <original>V</original>
    <variation>E</variation>
    <location>
        <position position="184"/>
    </location>
</feature>
<keyword id="KW-0025">Alternative splicing</keyword>
<keyword id="KW-0119">Carbohydrate metabolism</keyword>
<keyword id="KW-0378">Hydrolase</keyword>
<keyword id="KW-0460">Magnesium</keyword>
<keyword id="KW-0479">Metal-binding</keyword>
<keyword id="KW-1185">Reference proteome</keyword>
<reference key="1">
    <citation type="journal article" date="2005" name="Science">
        <title>The transcriptional landscape of the mammalian genome.</title>
        <authorList>
            <person name="Carninci P."/>
            <person name="Kasukawa T."/>
            <person name="Katayama S."/>
            <person name="Gough J."/>
            <person name="Frith M.C."/>
            <person name="Maeda N."/>
            <person name="Oyama R."/>
            <person name="Ravasi T."/>
            <person name="Lenhard B."/>
            <person name="Wells C."/>
            <person name="Kodzius R."/>
            <person name="Shimokawa K."/>
            <person name="Bajic V.B."/>
            <person name="Brenner S.E."/>
            <person name="Batalov S."/>
            <person name="Forrest A.R."/>
            <person name="Zavolan M."/>
            <person name="Davis M.J."/>
            <person name="Wilming L.G."/>
            <person name="Aidinis V."/>
            <person name="Allen J.E."/>
            <person name="Ambesi-Impiombato A."/>
            <person name="Apweiler R."/>
            <person name="Aturaliya R.N."/>
            <person name="Bailey T.L."/>
            <person name="Bansal M."/>
            <person name="Baxter L."/>
            <person name="Beisel K.W."/>
            <person name="Bersano T."/>
            <person name="Bono H."/>
            <person name="Chalk A.M."/>
            <person name="Chiu K.P."/>
            <person name="Choudhary V."/>
            <person name="Christoffels A."/>
            <person name="Clutterbuck D.R."/>
            <person name="Crowe M.L."/>
            <person name="Dalla E."/>
            <person name="Dalrymple B.P."/>
            <person name="de Bono B."/>
            <person name="Della Gatta G."/>
            <person name="di Bernardo D."/>
            <person name="Down T."/>
            <person name="Engstrom P."/>
            <person name="Fagiolini M."/>
            <person name="Faulkner G."/>
            <person name="Fletcher C.F."/>
            <person name="Fukushima T."/>
            <person name="Furuno M."/>
            <person name="Futaki S."/>
            <person name="Gariboldi M."/>
            <person name="Georgii-Hemming P."/>
            <person name="Gingeras T.R."/>
            <person name="Gojobori T."/>
            <person name="Green R.E."/>
            <person name="Gustincich S."/>
            <person name="Harbers M."/>
            <person name="Hayashi Y."/>
            <person name="Hensch T.K."/>
            <person name="Hirokawa N."/>
            <person name="Hill D."/>
            <person name="Huminiecki L."/>
            <person name="Iacono M."/>
            <person name="Ikeo K."/>
            <person name="Iwama A."/>
            <person name="Ishikawa T."/>
            <person name="Jakt M."/>
            <person name="Kanapin A."/>
            <person name="Katoh M."/>
            <person name="Kawasawa Y."/>
            <person name="Kelso J."/>
            <person name="Kitamura H."/>
            <person name="Kitano H."/>
            <person name="Kollias G."/>
            <person name="Krishnan S.P."/>
            <person name="Kruger A."/>
            <person name="Kummerfeld S.K."/>
            <person name="Kurochkin I.V."/>
            <person name="Lareau L.F."/>
            <person name="Lazarevic D."/>
            <person name="Lipovich L."/>
            <person name="Liu J."/>
            <person name="Liuni S."/>
            <person name="McWilliam S."/>
            <person name="Madan Babu M."/>
            <person name="Madera M."/>
            <person name="Marchionni L."/>
            <person name="Matsuda H."/>
            <person name="Matsuzawa S."/>
            <person name="Miki H."/>
            <person name="Mignone F."/>
            <person name="Miyake S."/>
            <person name="Morris K."/>
            <person name="Mottagui-Tabar S."/>
            <person name="Mulder N."/>
            <person name="Nakano N."/>
            <person name="Nakauchi H."/>
            <person name="Ng P."/>
            <person name="Nilsson R."/>
            <person name="Nishiguchi S."/>
            <person name="Nishikawa S."/>
            <person name="Nori F."/>
            <person name="Ohara O."/>
            <person name="Okazaki Y."/>
            <person name="Orlando V."/>
            <person name="Pang K.C."/>
            <person name="Pavan W.J."/>
            <person name="Pavesi G."/>
            <person name="Pesole G."/>
            <person name="Petrovsky N."/>
            <person name="Piazza S."/>
            <person name="Reed J."/>
            <person name="Reid J.F."/>
            <person name="Ring B.Z."/>
            <person name="Ringwald M."/>
            <person name="Rost B."/>
            <person name="Ruan Y."/>
            <person name="Salzberg S.L."/>
            <person name="Sandelin A."/>
            <person name="Schneider C."/>
            <person name="Schoenbach C."/>
            <person name="Sekiguchi K."/>
            <person name="Semple C.A."/>
            <person name="Seno S."/>
            <person name="Sessa L."/>
            <person name="Sheng Y."/>
            <person name="Shibata Y."/>
            <person name="Shimada H."/>
            <person name="Shimada K."/>
            <person name="Silva D."/>
            <person name="Sinclair B."/>
            <person name="Sperling S."/>
            <person name="Stupka E."/>
            <person name="Sugiura K."/>
            <person name="Sultana R."/>
            <person name="Takenaka Y."/>
            <person name="Taki K."/>
            <person name="Tammoja K."/>
            <person name="Tan S.L."/>
            <person name="Tang S."/>
            <person name="Taylor M.S."/>
            <person name="Tegner J."/>
            <person name="Teichmann S.A."/>
            <person name="Ueda H.R."/>
            <person name="van Nimwegen E."/>
            <person name="Verardo R."/>
            <person name="Wei C.L."/>
            <person name="Yagi K."/>
            <person name="Yamanishi H."/>
            <person name="Zabarovsky E."/>
            <person name="Zhu S."/>
            <person name="Zimmer A."/>
            <person name="Hide W."/>
            <person name="Bult C."/>
            <person name="Grimmond S.M."/>
            <person name="Teasdale R.D."/>
            <person name="Liu E.T."/>
            <person name="Brusic V."/>
            <person name="Quackenbush J."/>
            <person name="Wahlestedt C."/>
            <person name="Mattick J.S."/>
            <person name="Hume D.A."/>
            <person name="Kai C."/>
            <person name="Sasaki D."/>
            <person name="Tomaru Y."/>
            <person name="Fukuda S."/>
            <person name="Kanamori-Katayama M."/>
            <person name="Suzuki M."/>
            <person name="Aoki J."/>
            <person name="Arakawa T."/>
            <person name="Iida J."/>
            <person name="Imamura K."/>
            <person name="Itoh M."/>
            <person name="Kato T."/>
            <person name="Kawaji H."/>
            <person name="Kawagashira N."/>
            <person name="Kawashima T."/>
            <person name="Kojima M."/>
            <person name="Kondo S."/>
            <person name="Konno H."/>
            <person name="Nakano K."/>
            <person name="Ninomiya N."/>
            <person name="Nishio T."/>
            <person name="Okada M."/>
            <person name="Plessy C."/>
            <person name="Shibata K."/>
            <person name="Shiraki T."/>
            <person name="Suzuki S."/>
            <person name="Tagami M."/>
            <person name="Waki K."/>
            <person name="Watahiki A."/>
            <person name="Okamura-Oho Y."/>
            <person name="Suzuki H."/>
            <person name="Kawai J."/>
            <person name="Hayashizaki Y."/>
        </authorList>
    </citation>
    <scope>NUCLEOTIDE SEQUENCE [LARGE SCALE MRNA] (ISOFORMS 1 AND 2)</scope>
    <source>
        <strain>C57BL/6J</strain>
        <tissue>Pancreas</tissue>
        <tissue>Testis</tissue>
    </source>
</reference>
<reference key="2">
    <citation type="journal article" date="2004" name="Genome Res.">
        <title>The status, quality, and expansion of the NIH full-length cDNA project: the Mammalian Gene Collection (MGC).</title>
        <authorList>
            <consortium name="The MGC Project Team"/>
        </authorList>
    </citation>
    <scope>NUCLEOTIDE SEQUENCE [LARGE SCALE MRNA] (ISOFORM 1)</scope>
</reference>
<proteinExistence type="evidence at transcript level"/>
<gene>
    <name type="primary">Ydjc</name>
</gene>
<dbReference type="EC" id="3.5.1.-" evidence="1"/>
<dbReference type="EMBL" id="AK007503">
    <property type="protein sequence ID" value="BAB25075.1"/>
    <property type="molecule type" value="mRNA"/>
</dbReference>
<dbReference type="EMBL" id="AK076869">
    <property type="protein sequence ID" value="BAC36514.1"/>
    <property type="status" value="ALT_FRAME"/>
    <property type="molecule type" value="mRNA"/>
</dbReference>
<dbReference type="EMBL" id="BC115584">
    <property type="protein sequence ID" value="AAI15585.1"/>
    <property type="molecule type" value="mRNA"/>
</dbReference>
<dbReference type="EMBL" id="BC115585">
    <property type="protein sequence ID" value="AAI15586.1"/>
    <property type="molecule type" value="mRNA"/>
</dbReference>
<dbReference type="CCDS" id="CCDS27996.1">
    <molecule id="Q14BV6-1"/>
</dbReference>
<dbReference type="RefSeq" id="NP_081216.1">
    <molecule id="Q14BV6-1"/>
    <property type="nucleotide sequence ID" value="NM_026940.4"/>
</dbReference>
<dbReference type="SMR" id="Q14BV6"/>
<dbReference type="FunCoup" id="Q14BV6">
    <property type="interactions" value="12"/>
</dbReference>
<dbReference type="STRING" id="10090.ENSMUSP00000069864"/>
<dbReference type="GlyGen" id="Q14BV6">
    <property type="glycosylation" value="1 site, 1 N-linked glycan (1 site)"/>
</dbReference>
<dbReference type="iPTMnet" id="Q14BV6"/>
<dbReference type="PhosphoSitePlus" id="Q14BV6"/>
<dbReference type="PaxDb" id="10090-ENSMUSP00000069864"/>
<dbReference type="ProteomicsDB" id="275116">
    <molecule id="Q14BV6-1"/>
</dbReference>
<dbReference type="ProteomicsDB" id="275117">
    <molecule id="Q14BV6-2"/>
</dbReference>
<dbReference type="Antibodypedia" id="54203">
    <property type="antibodies" value="65 antibodies from 11 providers"/>
</dbReference>
<dbReference type="DNASU" id="69101"/>
<dbReference type="Ensembl" id="ENSMUST00000069064.7">
    <molecule id="Q14BV6-1"/>
    <property type="protein sequence ID" value="ENSMUSP00000069864.5"/>
    <property type="gene ID" value="ENSMUSG00000041774.17"/>
</dbReference>
<dbReference type="Ensembl" id="ENSMUST00000231726.2">
    <molecule id="Q14BV6-2"/>
    <property type="protein sequence ID" value="ENSMUSP00000156244.2"/>
    <property type="gene ID" value="ENSMUSG00000041774.17"/>
</dbReference>
<dbReference type="GeneID" id="69101"/>
<dbReference type="KEGG" id="mmu:69101"/>
<dbReference type="UCSC" id="uc007ykg.1">
    <molecule id="Q14BV6-2"/>
    <property type="organism name" value="mouse"/>
</dbReference>
<dbReference type="UCSC" id="uc007ykj.2">
    <molecule id="Q14BV6-1"/>
    <property type="organism name" value="mouse"/>
</dbReference>
<dbReference type="AGR" id="MGI:1916351"/>
<dbReference type="CTD" id="150223"/>
<dbReference type="MGI" id="MGI:1916351">
    <property type="gene designation" value="Ydjc"/>
</dbReference>
<dbReference type="VEuPathDB" id="HostDB:ENSMUSG00000041774"/>
<dbReference type="eggNOG" id="ENOG502RYFJ">
    <property type="taxonomic scope" value="Eukaryota"/>
</dbReference>
<dbReference type="GeneTree" id="ENSGT00390000002575"/>
<dbReference type="HOGENOM" id="CLU_064244_1_0_1"/>
<dbReference type="InParanoid" id="Q14BV6"/>
<dbReference type="OMA" id="GLHNCDW"/>
<dbReference type="OrthoDB" id="8908051at2759"/>
<dbReference type="PhylomeDB" id="Q14BV6"/>
<dbReference type="TreeFam" id="TF329340"/>
<dbReference type="BioGRID-ORCS" id="69101">
    <property type="hits" value="1 hit in 78 CRISPR screens"/>
</dbReference>
<dbReference type="ChiTaRS" id="Ydjc">
    <property type="organism name" value="mouse"/>
</dbReference>
<dbReference type="PRO" id="PR:Q14BV6"/>
<dbReference type="Proteomes" id="UP000000589">
    <property type="component" value="Chromosome 16"/>
</dbReference>
<dbReference type="RNAct" id="Q14BV6">
    <property type="molecule type" value="protein"/>
</dbReference>
<dbReference type="Bgee" id="ENSMUSG00000041774">
    <property type="expression patterns" value="Expressed in spermatid and 159 other cell types or tissues"/>
</dbReference>
<dbReference type="ExpressionAtlas" id="Q14BV6">
    <property type="expression patterns" value="baseline and differential"/>
</dbReference>
<dbReference type="GO" id="GO:0016787">
    <property type="term" value="F:hydrolase activity"/>
    <property type="evidence" value="ECO:0007669"/>
    <property type="project" value="UniProtKB-KW"/>
</dbReference>
<dbReference type="GO" id="GO:0000287">
    <property type="term" value="F:magnesium ion binding"/>
    <property type="evidence" value="ECO:0000250"/>
    <property type="project" value="UniProtKB"/>
</dbReference>
<dbReference type="GO" id="GO:0005975">
    <property type="term" value="P:carbohydrate metabolic process"/>
    <property type="evidence" value="ECO:0007669"/>
    <property type="project" value="InterPro"/>
</dbReference>
<dbReference type="CDD" id="cd10806">
    <property type="entry name" value="YdjC_like_2"/>
    <property type="match status" value="1"/>
</dbReference>
<dbReference type="FunFam" id="3.20.20.370:FF:000006">
    <property type="entry name" value="YdjC chitooligosaccharide deacetylase homolog"/>
    <property type="match status" value="1"/>
</dbReference>
<dbReference type="Gene3D" id="3.20.20.370">
    <property type="entry name" value="Glycoside hydrolase/deacetylase"/>
    <property type="match status" value="1"/>
</dbReference>
<dbReference type="InterPro" id="IPR011330">
    <property type="entry name" value="Glyco_hydro/deAcase_b/a-brl"/>
</dbReference>
<dbReference type="InterPro" id="IPR006879">
    <property type="entry name" value="YdjC-like"/>
</dbReference>
<dbReference type="PANTHER" id="PTHR31609:SF1">
    <property type="entry name" value="CARBOHYDRATE DEACETYLASE"/>
    <property type="match status" value="1"/>
</dbReference>
<dbReference type="PANTHER" id="PTHR31609">
    <property type="entry name" value="YDJC DEACETYLASE FAMILY MEMBER"/>
    <property type="match status" value="1"/>
</dbReference>
<dbReference type="Pfam" id="PF04794">
    <property type="entry name" value="YdjC"/>
    <property type="match status" value="1"/>
</dbReference>
<dbReference type="SUPFAM" id="SSF88713">
    <property type="entry name" value="Glycoside hydrolase/deacetylase"/>
    <property type="match status" value="1"/>
</dbReference>
<protein>
    <recommendedName>
        <fullName evidence="1">Carbohydrate deacetylase</fullName>
        <ecNumber evidence="1">3.5.1.-</ecNumber>
    </recommendedName>
</protein>